<sequence length="1074" mass="114350">MDDDDDSCLLDLIGDPQALNYFLHGPSSKSGSDDVTNAGYSAANSNSIFANSTNADPKSALKGVSDQLGEGPSDGLPLASSLQFLEDELESSPLPDLSEDQPFDILQKSLQEANITEQTLAEEAYLDASIGSSQQFAQAQLHPSSSASFTQASNVSNYSGQTLQPIGVTHVPVGASFASNTVGVQHGFMQHVGISVPSQHLPNSSQISGSGQIQLIGSFGNQPSMMTINNLDGSQIILKGSGQQAPSNVSGGLLVHRQTPNGNSLFGNSTSSPVAQPVTVPFNSTNFQASLPVHNIIIQRGLAPNSNKVPINIQPKPVQMGQQSAYNVNNLGIQQHHAQQGISFAPTSSPQGSVVGPHMSVNIVNQQNTRKPVTSQAVSGTGGSIVIHSPMGQPHTPQSQFLIPTSLSVSSNSVHHVQAINGQLLQTQPSQLISGQVASEHVMLNRNSSNMLRTNQPYSGQMLNNQNTAVQLVSGQTFATSGSPVIVNHASPQIVGGQMPLQQASPTVLHLSPGQSSVSQGRPGFATMPAVSGMAGPARFPAVSSASTAHPTLGPTVQSGAPGSNFTGDQLTQANRTPAPVSVSHRLPVSASKSPSTLSNTPGTQQQFFCQAQKKCLNQTSPIPTSKTTDGLRPSQIPGLLSTALPGQDSGSKIMPATLGATQAQPESSVGSSPSQTAVQVDSHPGQKRPAAKQLTKGAFILQQLQRDQAHAVTPDKSQFRSLNDTVQRLLSYHVCQGSMPTEEDLRQVDNEFEEVATQLLKRTQAMLNKYRFLLLEDAMRINPSAEMVMIDRMFNQEERASLSRDKRLALVDPEGFQADFCCSFKLDEAVPETPLDRSDQHRSKTSSLHQVPRAQSRDRAKPGMAEATNHDQFHLVPNHIVVSAEGNISKKSEGHSRTLKFDRGVLGQYRGPPEDKGGRRDPAKVSRCSPGPEGHRKSLPRPDHGSESKLPGVLASSHMEMPCLDSFQDKALRNSPKNEVLHTDIMKGSGEPQPDLQLTKSLEKTFKNILELKNSGRPPSDPTASGAADLDFPSFSPMASQENCLEKFIPDHSEGVVETDSILEAAVNSILEC</sequence>
<protein>
    <recommendedName>
        <fullName evidence="1">BRD4-interacting chromatin-remodeling complex-associated protein-like</fullName>
    </recommendedName>
</protein>
<dbReference type="EMBL" id="AK029927">
    <property type="status" value="NOT_ANNOTATED_CDS"/>
    <property type="molecule type" value="mRNA"/>
</dbReference>
<dbReference type="EMBL" id="AB093219">
    <property type="protein sequence ID" value="BAC41403.1"/>
    <property type="molecule type" value="mRNA"/>
</dbReference>
<dbReference type="CCDS" id="CCDS50126.1"/>
<dbReference type="RefSeq" id="NP_001093922.1">
    <property type="nucleotide sequence ID" value="NM_001100452.2"/>
</dbReference>
<dbReference type="RefSeq" id="XP_006524039.1">
    <property type="nucleotide sequence ID" value="XM_006523976.4"/>
</dbReference>
<dbReference type="RefSeq" id="XP_006524043.1">
    <property type="nucleotide sequence ID" value="XM_006523980.3"/>
</dbReference>
<dbReference type="RefSeq" id="XP_006524044.1">
    <property type="nucleotide sequence ID" value="XM_006523981.5"/>
</dbReference>
<dbReference type="RefSeq" id="XP_011244647.2">
    <property type="nucleotide sequence ID" value="XM_011246345.4"/>
</dbReference>
<dbReference type="RefSeq" id="XP_017172866.1">
    <property type="nucleotide sequence ID" value="XM_017317377.2"/>
</dbReference>
<dbReference type="RefSeq" id="XP_036016328.1">
    <property type="nucleotide sequence ID" value="XM_036160435.1"/>
</dbReference>
<dbReference type="RefSeq" id="XP_036016329.1">
    <property type="nucleotide sequence ID" value="XM_036160436.1"/>
</dbReference>
<dbReference type="RefSeq" id="XP_036016330.1">
    <property type="nucleotide sequence ID" value="XM_036160437.1"/>
</dbReference>
<dbReference type="RefSeq" id="XP_036016331.1">
    <property type="nucleotide sequence ID" value="XM_036160438.1"/>
</dbReference>
<dbReference type="RefSeq" id="XP_036016332.1">
    <property type="nucleotide sequence ID" value="XM_036160439.1"/>
</dbReference>
<dbReference type="RefSeq" id="XP_036016333.1">
    <property type="nucleotide sequence ID" value="XM_036160440.1"/>
</dbReference>
<dbReference type="RefSeq" id="XP_036016334.1">
    <property type="nucleotide sequence ID" value="XM_036160441.1"/>
</dbReference>
<dbReference type="ComplexPortal" id="CPX-4204">
    <property type="entry name" value="GBAF (SWI/SNF) ATP-dependent chromatin remodeling complex, ACTL6A-BICRAL-SMARCA2 variant"/>
</dbReference>
<dbReference type="ComplexPortal" id="CPX-4222">
    <property type="entry name" value="GBAF (SWI/SNF) ATP-dependent chromatin remodeling complex, ACTL6A-BICRAL-SMARCA4 variant"/>
</dbReference>
<dbReference type="ComplexPortal" id="CPX-4228">
    <property type="entry name" value="GBAF (SWI/SNF) ATP-dependent chromatin remodeling complex, ACTL6B-BICRAL-SMARCA2 variant"/>
</dbReference>
<dbReference type="ComplexPortal" id="CPX-4230">
    <property type="entry name" value="GBAF (SWI/SNF) ATP-dependent chromatin remodeling complex, ACTL6B-BICRAL-SMARCA4 variant"/>
</dbReference>
<dbReference type="FunCoup" id="Q8CHH5">
    <property type="interactions" value="1627"/>
</dbReference>
<dbReference type="STRING" id="10090.ENSMUSP00000044833"/>
<dbReference type="GlyGen" id="Q8CHH5">
    <property type="glycosylation" value="4 sites, 1 N-linked glycan (1 site), 1 O-linked glycan (2 sites)"/>
</dbReference>
<dbReference type="iPTMnet" id="Q8CHH5"/>
<dbReference type="PhosphoSitePlus" id="Q8CHH5"/>
<dbReference type="PaxDb" id="10090-ENSMUSP00000044833"/>
<dbReference type="ProteomicsDB" id="273688"/>
<dbReference type="Antibodypedia" id="30175">
    <property type="antibodies" value="19 antibodies from 8 providers"/>
</dbReference>
<dbReference type="Ensembl" id="ENSMUST00000040624.7">
    <property type="protein sequence ID" value="ENSMUSP00000044833.6"/>
    <property type="gene ID" value="ENSMUSG00000036568.8"/>
</dbReference>
<dbReference type="Ensembl" id="ENSMUST00000233537.2">
    <property type="protein sequence ID" value="ENSMUSP00000156590.2"/>
    <property type="gene ID" value="ENSMUSG00000036568.8"/>
</dbReference>
<dbReference type="GeneID" id="210982"/>
<dbReference type="KEGG" id="mmu:210982"/>
<dbReference type="UCSC" id="uc008cul.2">
    <property type="organism name" value="mouse"/>
</dbReference>
<dbReference type="AGR" id="MGI:2673855"/>
<dbReference type="CTD" id="23506"/>
<dbReference type="MGI" id="MGI:2673855">
    <property type="gene designation" value="Bicral"/>
</dbReference>
<dbReference type="VEuPathDB" id="HostDB:ENSMUSG00000036568"/>
<dbReference type="eggNOG" id="ENOG502QPQ9">
    <property type="taxonomic scope" value="Eukaryota"/>
</dbReference>
<dbReference type="GeneTree" id="ENSGT00940000159766"/>
<dbReference type="HOGENOM" id="CLU_011632_0_0_1"/>
<dbReference type="InParanoid" id="Q8CHH5"/>
<dbReference type="OMA" id="DQFHPVP"/>
<dbReference type="OrthoDB" id="2556847at2759"/>
<dbReference type="PhylomeDB" id="Q8CHH5"/>
<dbReference type="TreeFam" id="TF335495"/>
<dbReference type="BioGRID-ORCS" id="210982">
    <property type="hits" value="6 hits in 77 CRISPR screens"/>
</dbReference>
<dbReference type="ChiTaRS" id="Bicral">
    <property type="organism name" value="mouse"/>
</dbReference>
<dbReference type="PRO" id="PR:Q8CHH5"/>
<dbReference type="Proteomes" id="UP000000589">
    <property type="component" value="Chromosome 17"/>
</dbReference>
<dbReference type="RNAct" id="Q8CHH5">
    <property type="molecule type" value="protein"/>
</dbReference>
<dbReference type="Bgee" id="ENSMUSG00000036568">
    <property type="expression patterns" value="Expressed in superior cervical ganglion and 228 other cell types or tissues"/>
</dbReference>
<dbReference type="ExpressionAtlas" id="Q8CHH5">
    <property type="expression patterns" value="baseline and differential"/>
</dbReference>
<dbReference type="GO" id="GO:0000785">
    <property type="term" value="C:chromatin"/>
    <property type="evidence" value="ECO:0000303"/>
    <property type="project" value="ComplexPortal"/>
</dbReference>
<dbReference type="GO" id="GO:0140288">
    <property type="term" value="C:GBAF complex"/>
    <property type="evidence" value="ECO:0000303"/>
    <property type="project" value="ComplexPortal"/>
</dbReference>
<dbReference type="GO" id="GO:0016514">
    <property type="term" value="C:SWI/SNF complex"/>
    <property type="evidence" value="ECO:0000314"/>
    <property type="project" value="UniProtKB"/>
</dbReference>
<dbReference type="GO" id="GO:0006338">
    <property type="term" value="P:chromatin remodeling"/>
    <property type="evidence" value="ECO:0000303"/>
    <property type="project" value="ComplexPortal"/>
</dbReference>
<dbReference type="GO" id="GO:0045596">
    <property type="term" value="P:negative regulation of cell differentiation"/>
    <property type="evidence" value="ECO:0000303"/>
    <property type="project" value="ComplexPortal"/>
</dbReference>
<dbReference type="GO" id="GO:0008284">
    <property type="term" value="P:positive regulation of cell population proliferation"/>
    <property type="evidence" value="ECO:0000303"/>
    <property type="project" value="ComplexPortal"/>
</dbReference>
<dbReference type="GO" id="GO:1902459">
    <property type="term" value="P:positive regulation of stem cell population maintenance"/>
    <property type="evidence" value="ECO:0000303"/>
    <property type="project" value="ComplexPortal"/>
</dbReference>
<dbReference type="GO" id="GO:0006357">
    <property type="term" value="P:regulation of transcription by RNA polymerase II"/>
    <property type="evidence" value="ECO:0000303"/>
    <property type="project" value="ComplexPortal"/>
</dbReference>
<dbReference type="InterPro" id="IPR052438">
    <property type="entry name" value="Chromatin_remod/trans_coact"/>
</dbReference>
<dbReference type="InterPro" id="IPR015671">
    <property type="entry name" value="GSCR1_dom"/>
</dbReference>
<dbReference type="PANTHER" id="PTHR15572:SF2">
    <property type="entry name" value="BRD4-INTERACTING CHROMATIN-REMODELING COMPLEX-ASSOCIATED PROTEIN-LIKE"/>
    <property type="match status" value="1"/>
</dbReference>
<dbReference type="PANTHER" id="PTHR15572">
    <property type="entry name" value="GLIOMA TUMOR SUPPRESSOR CANDIDATE REGION GENE 1"/>
    <property type="match status" value="1"/>
</dbReference>
<dbReference type="Pfam" id="PF15249">
    <property type="entry name" value="GLTSCR1"/>
    <property type="match status" value="1"/>
</dbReference>
<organism>
    <name type="scientific">Mus musculus</name>
    <name type="common">Mouse</name>
    <dbReference type="NCBI Taxonomy" id="10090"/>
    <lineage>
        <taxon>Eukaryota</taxon>
        <taxon>Metazoa</taxon>
        <taxon>Chordata</taxon>
        <taxon>Craniata</taxon>
        <taxon>Vertebrata</taxon>
        <taxon>Euteleostomi</taxon>
        <taxon>Mammalia</taxon>
        <taxon>Eutheria</taxon>
        <taxon>Euarchontoglires</taxon>
        <taxon>Glires</taxon>
        <taxon>Rodentia</taxon>
        <taxon>Myomorpha</taxon>
        <taxon>Muroidea</taxon>
        <taxon>Muridae</taxon>
        <taxon>Murinae</taxon>
        <taxon>Mus</taxon>
        <taxon>Mus</taxon>
    </lineage>
</organism>
<proteinExistence type="evidence at protein level"/>
<comment type="function">
    <text evidence="1">Component of SWI/SNF chromatin remodeling subcomplex GBAF that carries out key enzymatic activities, changing chromatin structure by altering DNA-histone contacts within a nucleosome in an ATP-dependent manner.</text>
</comment>
<comment type="subunit">
    <text evidence="3">Component of the multiprotein chromatin-remodeling complexes SWI/SNF: SWI/SNF-A (BAF), SWI/SNF-B (PBAF) and related complexes. The canonical complex contains a catalytic subunit (either SMARCA4/BRG1/BAF190A or SMARCA2/BRM/BAF190B) and at least SMARCE1, ACTL6A/BAF53, SMARCC1/BAF155, SMARCC2/BAF170, and SMARCB1/SNF5/BAF47. Other subunits specific to each of the complexes may also be present permitting several possible combinations developmentally and tissue specific. Component of the SWI/SNF (GBAF) subcomplex, which includes at least BICRA or BICRAL (mutually exclusive), BRD9, SS18, the core BAF subunits, SMARCA2/BRM, SMARCA4/BRG1/BAF190A, ACTL6A/BAF53, SMARCC1/BAF155, and SMARCD1/BAF60A.</text>
</comment>
<comment type="sequence caution" evidence="4">
    <conflict type="frameshift">
        <sequence resource="EMBL" id="AK029927"/>
    </conflict>
</comment>
<accession>Q8CHH5</accession>
<name>BICRL_MOUSE</name>
<feature type="chain" id="PRO_0000248603" description="BRD4-interacting chromatin-remodeling complex-associated protein-like">
    <location>
        <begin position="1"/>
        <end position="1074"/>
    </location>
</feature>
<feature type="region of interest" description="Disordered" evidence="2">
    <location>
        <begin position="542"/>
        <end position="603"/>
    </location>
</feature>
<feature type="region of interest" description="Disordered" evidence="2">
    <location>
        <begin position="620"/>
        <end position="689"/>
    </location>
</feature>
<feature type="region of interest" description="Disordered" evidence="2">
    <location>
        <begin position="834"/>
        <end position="874"/>
    </location>
</feature>
<feature type="region of interest" description="Disordered" evidence="2">
    <location>
        <begin position="887"/>
        <end position="952"/>
    </location>
</feature>
<feature type="compositionally biased region" description="Polar residues" evidence="2">
    <location>
        <begin position="544"/>
        <end position="576"/>
    </location>
</feature>
<feature type="compositionally biased region" description="Polar residues" evidence="2">
    <location>
        <begin position="591"/>
        <end position="603"/>
    </location>
</feature>
<feature type="compositionally biased region" description="Polar residues" evidence="2">
    <location>
        <begin position="620"/>
        <end position="629"/>
    </location>
</feature>
<feature type="compositionally biased region" description="Polar residues" evidence="2">
    <location>
        <begin position="660"/>
        <end position="680"/>
    </location>
</feature>
<feature type="compositionally biased region" description="Basic and acidic residues" evidence="2">
    <location>
        <begin position="889"/>
        <end position="904"/>
    </location>
</feature>
<feature type="compositionally biased region" description="Basic and acidic residues" evidence="2">
    <location>
        <begin position="913"/>
        <end position="925"/>
    </location>
</feature>
<feature type="compositionally biased region" description="Basic and acidic residues" evidence="2">
    <location>
        <begin position="934"/>
        <end position="948"/>
    </location>
</feature>
<feature type="modified residue" description="Phosphoserine" evidence="1">
    <location>
        <position position="621"/>
    </location>
</feature>
<feature type="modified residue" description="Phosphoserine" evidence="1">
    <location>
        <position position="976"/>
    </location>
</feature>
<evidence type="ECO:0000250" key="1">
    <source>
        <dbReference type="UniProtKB" id="Q6AI39"/>
    </source>
</evidence>
<evidence type="ECO:0000256" key="2">
    <source>
        <dbReference type="SAM" id="MobiDB-lite"/>
    </source>
</evidence>
<evidence type="ECO:0000269" key="3">
    <source>
    </source>
</evidence>
<evidence type="ECO:0000305" key="4"/>
<evidence type="ECO:0000312" key="5">
    <source>
        <dbReference type="EMBL" id="BAC41403.1"/>
    </source>
</evidence>
<evidence type="ECO:0000312" key="6">
    <source>
        <dbReference type="MGI" id="MGI:2673855"/>
    </source>
</evidence>
<gene>
    <name evidence="1" type="primary">Bicral</name>
    <name evidence="6" type="synonym">Gltscr1l</name>
    <name evidence="5" type="synonym">Kiaa0240</name>
</gene>
<reference key="1">
    <citation type="journal article" date="2005" name="Science">
        <title>The transcriptional landscape of the mammalian genome.</title>
        <authorList>
            <person name="Carninci P."/>
            <person name="Kasukawa T."/>
            <person name="Katayama S."/>
            <person name="Gough J."/>
            <person name="Frith M.C."/>
            <person name="Maeda N."/>
            <person name="Oyama R."/>
            <person name="Ravasi T."/>
            <person name="Lenhard B."/>
            <person name="Wells C."/>
            <person name="Kodzius R."/>
            <person name="Shimokawa K."/>
            <person name="Bajic V.B."/>
            <person name="Brenner S.E."/>
            <person name="Batalov S."/>
            <person name="Forrest A.R."/>
            <person name="Zavolan M."/>
            <person name="Davis M.J."/>
            <person name="Wilming L.G."/>
            <person name="Aidinis V."/>
            <person name="Allen J.E."/>
            <person name="Ambesi-Impiombato A."/>
            <person name="Apweiler R."/>
            <person name="Aturaliya R.N."/>
            <person name="Bailey T.L."/>
            <person name="Bansal M."/>
            <person name="Baxter L."/>
            <person name="Beisel K.W."/>
            <person name="Bersano T."/>
            <person name="Bono H."/>
            <person name="Chalk A.M."/>
            <person name="Chiu K.P."/>
            <person name="Choudhary V."/>
            <person name="Christoffels A."/>
            <person name="Clutterbuck D.R."/>
            <person name="Crowe M.L."/>
            <person name="Dalla E."/>
            <person name="Dalrymple B.P."/>
            <person name="de Bono B."/>
            <person name="Della Gatta G."/>
            <person name="di Bernardo D."/>
            <person name="Down T."/>
            <person name="Engstrom P."/>
            <person name="Fagiolini M."/>
            <person name="Faulkner G."/>
            <person name="Fletcher C.F."/>
            <person name="Fukushima T."/>
            <person name="Furuno M."/>
            <person name="Futaki S."/>
            <person name="Gariboldi M."/>
            <person name="Georgii-Hemming P."/>
            <person name="Gingeras T.R."/>
            <person name="Gojobori T."/>
            <person name="Green R.E."/>
            <person name="Gustincich S."/>
            <person name="Harbers M."/>
            <person name="Hayashi Y."/>
            <person name="Hensch T.K."/>
            <person name="Hirokawa N."/>
            <person name="Hill D."/>
            <person name="Huminiecki L."/>
            <person name="Iacono M."/>
            <person name="Ikeo K."/>
            <person name="Iwama A."/>
            <person name="Ishikawa T."/>
            <person name="Jakt M."/>
            <person name="Kanapin A."/>
            <person name="Katoh M."/>
            <person name="Kawasawa Y."/>
            <person name="Kelso J."/>
            <person name="Kitamura H."/>
            <person name="Kitano H."/>
            <person name="Kollias G."/>
            <person name="Krishnan S.P."/>
            <person name="Kruger A."/>
            <person name="Kummerfeld S.K."/>
            <person name="Kurochkin I.V."/>
            <person name="Lareau L.F."/>
            <person name="Lazarevic D."/>
            <person name="Lipovich L."/>
            <person name="Liu J."/>
            <person name="Liuni S."/>
            <person name="McWilliam S."/>
            <person name="Madan Babu M."/>
            <person name="Madera M."/>
            <person name="Marchionni L."/>
            <person name="Matsuda H."/>
            <person name="Matsuzawa S."/>
            <person name="Miki H."/>
            <person name="Mignone F."/>
            <person name="Miyake S."/>
            <person name="Morris K."/>
            <person name="Mottagui-Tabar S."/>
            <person name="Mulder N."/>
            <person name="Nakano N."/>
            <person name="Nakauchi H."/>
            <person name="Ng P."/>
            <person name="Nilsson R."/>
            <person name="Nishiguchi S."/>
            <person name="Nishikawa S."/>
            <person name="Nori F."/>
            <person name="Ohara O."/>
            <person name="Okazaki Y."/>
            <person name="Orlando V."/>
            <person name="Pang K.C."/>
            <person name="Pavan W.J."/>
            <person name="Pavesi G."/>
            <person name="Pesole G."/>
            <person name="Petrovsky N."/>
            <person name="Piazza S."/>
            <person name="Reed J."/>
            <person name="Reid J.F."/>
            <person name="Ring B.Z."/>
            <person name="Ringwald M."/>
            <person name="Rost B."/>
            <person name="Ruan Y."/>
            <person name="Salzberg S.L."/>
            <person name="Sandelin A."/>
            <person name="Schneider C."/>
            <person name="Schoenbach C."/>
            <person name="Sekiguchi K."/>
            <person name="Semple C.A."/>
            <person name="Seno S."/>
            <person name="Sessa L."/>
            <person name="Sheng Y."/>
            <person name="Shibata Y."/>
            <person name="Shimada H."/>
            <person name="Shimada K."/>
            <person name="Silva D."/>
            <person name="Sinclair B."/>
            <person name="Sperling S."/>
            <person name="Stupka E."/>
            <person name="Sugiura K."/>
            <person name="Sultana R."/>
            <person name="Takenaka Y."/>
            <person name="Taki K."/>
            <person name="Tammoja K."/>
            <person name="Tan S.L."/>
            <person name="Tang S."/>
            <person name="Taylor M.S."/>
            <person name="Tegner J."/>
            <person name="Teichmann S.A."/>
            <person name="Ueda H.R."/>
            <person name="van Nimwegen E."/>
            <person name="Verardo R."/>
            <person name="Wei C.L."/>
            <person name="Yagi K."/>
            <person name="Yamanishi H."/>
            <person name="Zabarovsky E."/>
            <person name="Zhu S."/>
            <person name="Zimmer A."/>
            <person name="Hide W."/>
            <person name="Bult C."/>
            <person name="Grimmond S.M."/>
            <person name="Teasdale R.D."/>
            <person name="Liu E.T."/>
            <person name="Brusic V."/>
            <person name="Quackenbush J."/>
            <person name="Wahlestedt C."/>
            <person name="Mattick J.S."/>
            <person name="Hume D.A."/>
            <person name="Kai C."/>
            <person name="Sasaki D."/>
            <person name="Tomaru Y."/>
            <person name="Fukuda S."/>
            <person name="Kanamori-Katayama M."/>
            <person name="Suzuki M."/>
            <person name="Aoki J."/>
            <person name="Arakawa T."/>
            <person name="Iida J."/>
            <person name="Imamura K."/>
            <person name="Itoh M."/>
            <person name="Kato T."/>
            <person name="Kawaji H."/>
            <person name="Kawagashira N."/>
            <person name="Kawashima T."/>
            <person name="Kojima M."/>
            <person name="Kondo S."/>
            <person name="Konno H."/>
            <person name="Nakano K."/>
            <person name="Ninomiya N."/>
            <person name="Nishio T."/>
            <person name="Okada M."/>
            <person name="Plessy C."/>
            <person name="Shibata K."/>
            <person name="Shiraki T."/>
            <person name="Suzuki S."/>
            <person name="Tagami M."/>
            <person name="Waki K."/>
            <person name="Watahiki A."/>
            <person name="Okamura-Oho Y."/>
            <person name="Suzuki H."/>
            <person name="Kawai J."/>
            <person name="Hayashizaki Y."/>
        </authorList>
    </citation>
    <scope>NUCLEOTIDE SEQUENCE [LARGE SCALE MRNA]</scope>
    <source>
        <strain>C57BL/6J</strain>
        <tissue>Testis</tissue>
    </source>
</reference>
<reference key="2">
    <citation type="submission" date="2005-02" db="EMBL/GenBank/DDBJ databases">
        <title>Prediction of the coding sequences of mouse homologues of KIAA gene. The complete nucleotide sequences of mouse KIAA-homologous cDNAs identified by screening of terminal sequences of cDNA clones randomly sampled from size-fractionated libraries.</title>
        <authorList>
            <person name="Okazaki N."/>
            <person name="Kikuno R.F."/>
            <person name="Ohara R."/>
            <person name="Inamoto S."/>
            <person name="Nagase T."/>
            <person name="Ohara O."/>
            <person name="Koga H."/>
        </authorList>
    </citation>
    <scope>NUCLEOTIDE SEQUENCE [LARGE SCALE MRNA] OF 143-1074</scope>
    <source>
        <tissue>Fetal brain</tissue>
    </source>
</reference>
<reference key="3">
    <citation type="journal article" date="2018" name="J. Biol. Chem.">
        <title>Glioma tumor suppressor candidate region gene 1 (GLTSCR1) and its paralog GLTSCR1-like form SWI/SNF chromatin remodeling subcomplexes.</title>
        <authorList>
            <person name="Alpsoy A."/>
            <person name="Dykhuizen E.C."/>
        </authorList>
    </citation>
    <scope>IDENTIFICATION IN THE GBAF COMPLEX</scope>
</reference>
<keyword id="KW-0597">Phosphoprotein</keyword>
<keyword id="KW-1185">Reference proteome</keyword>